<name>Y1404_LACLS</name>
<dbReference type="EMBL" id="CP000425">
    <property type="protein sequence ID" value="ABJ72920.1"/>
    <property type="molecule type" value="Genomic_DNA"/>
</dbReference>
<dbReference type="RefSeq" id="WP_003130191.1">
    <property type="nucleotide sequence ID" value="NC_008527.1"/>
</dbReference>
<dbReference type="SMR" id="Q02YQ2"/>
<dbReference type="KEGG" id="llc:LACR_1404"/>
<dbReference type="HOGENOM" id="CLU_180108_0_1_9"/>
<dbReference type="Proteomes" id="UP000000240">
    <property type="component" value="Chromosome"/>
</dbReference>
<dbReference type="GO" id="GO:0005886">
    <property type="term" value="C:plasma membrane"/>
    <property type="evidence" value="ECO:0007669"/>
    <property type="project" value="UniProtKB-SubCell"/>
</dbReference>
<dbReference type="HAMAP" id="MF_00363">
    <property type="entry name" value="UPF0154"/>
    <property type="match status" value="1"/>
</dbReference>
<dbReference type="InterPro" id="IPR005359">
    <property type="entry name" value="UPF0154"/>
</dbReference>
<dbReference type="Pfam" id="PF03672">
    <property type="entry name" value="UPF0154"/>
    <property type="match status" value="1"/>
</dbReference>
<accession>Q02YQ2</accession>
<organism>
    <name type="scientific">Lactococcus lactis subsp. cremoris (strain SK11)</name>
    <dbReference type="NCBI Taxonomy" id="272622"/>
    <lineage>
        <taxon>Bacteria</taxon>
        <taxon>Bacillati</taxon>
        <taxon>Bacillota</taxon>
        <taxon>Bacilli</taxon>
        <taxon>Lactobacillales</taxon>
        <taxon>Streptococcaceae</taxon>
        <taxon>Lactococcus</taxon>
        <taxon>Lactococcus cremoris subsp. cremoris</taxon>
    </lineage>
</organism>
<protein>
    <recommendedName>
        <fullName evidence="1">UPF0154 protein LACR_1404</fullName>
    </recommendedName>
</protein>
<keyword id="KW-1003">Cell membrane</keyword>
<keyword id="KW-0472">Membrane</keyword>
<keyword id="KW-0812">Transmembrane</keyword>
<keyword id="KW-1133">Transmembrane helix</keyword>
<feature type="chain" id="PRO_1000005631" description="UPF0154 protein LACR_1404">
    <location>
        <begin position="1"/>
        <end position="79"/>
    </location>
</feature>
<feature type="transmembrane region" description="Helical" evidence="1">
    <location>
        <begin position="4"/>
        <end position="24"/>
    </location>
</feature>
<reference key="1">
    <citation type="journal article" date="2006" name="Proc. Natl. Acad. Sci. U.S.A.">
        <title>Comparative genomics of the lactic acid bacteria.</title>
        <authorList>
            <person name="Makarova K.S."/>
            <person name="Slesarev A."/>
            <person name="Wolf Y.I."/>
            <person name="Sorokin A."/>
            <person name="Mirkin B."/>
            <person name="Koonin E.V."/>
            <person name="Pavlov A."/>
            <person name="Pavlova N."/>
            <person name="Karamychev V."/>
            <person name="Polouchine N."/>
            <person name="Shakhova V."/>
            <person name="Grigoriev I."/>
            <person name="Lou Y."/>
            <person name="Rohksar D."/>
            <person name="Lucas S."/>
            <person name="Huang K."/>
            <person name="Goodstein D.M."/>
            <person name="Hawkins T."/>
            <person name="Plengvidhya V."/>
            <person name="Welker D."/>
            <person name="Hughes J."/>
            <person name="Goh Y."/>
            <person name="Benson A."/>
            <person name="Baldwin K."/>
            <person name="Lee J.-H."/>
            <person name="Diaz-Muniz I."/>
            <person name="Dosti B."/>
            <person name="Smeianov V."/>
            <person name="Wechter W."/>
            <person name="Barabote R."/>
            <person name="Lorca G."/>
            <person name="Altermann E."/>
            <person name="Barrangou R."/>
            <person name="Ganesan B."/>
            <person name="Xie Y."/>
            <person name="Rawsthorne H."/>
            <person name="Tamir D."/>
            <person name="Parker C."/>
            <person name="Breidt F."/>
            <person name="Broadbent J.R."/>
            <person name="Hutkins R."/>
            <person name="O'Sullivan D."/>
            <person name="Steele J."/>
            <person name="Unlu G."/>
            <person name="Saier M.H. Jr."/>
            <person name="Klaenhammer T."/>
            <person name="Richardson P."/>
            <person name="Kozyavkin S."/>
            <person name="Weimer B.C."/>
            <person name="Mills D.A."/>
        </authorList>
    </citation>
    <scope>NUCLEOTIDE SEQUENCE [LARGE SCALE GENOMIC DNA]</scope>
    <source>
        <strain>SK11</strain>
    </source>
</reference>
<proteinExistence type="inferred from homology"/>
<evidence type="ECO:0000255" key="1">
    <source>
        <dbReference type="HAMAP-Rule" id="MF_00363"/>
    </source>
</evidence>
<sequence>MNLILAILLMVVCLLAGFFLGTWFSQRQTKKLLMDNPPLNEDAVRLMMGSMGRKPSEVQVQQVLRQIRAAAKQSDTNKK</sequence>
<gene>
    <name type="ordered locus">LACR_1404</name>
</gene>
<comment type="subcellular location">
    <subcellularLocation>
        <location evidence="1">Cell membrane</location>
        <topology evidence="1">Single-pass membrane protein</topology>
    </subcellularLocation>
</comment>
<comment type="similarity">
    <text evidence="1">Belongs to the UPF0154 family.</text>
</comment>